<gene>
    <name type="primary">KNOP1</name>
    <name type="synonym">TSG118</name>
</gene>
<proteinExistence type="evidence at transcript level"/>
<reference key="1">
    <citation type="submission" date="2007-04" db="EMBL/GenBank/DDBJ databases">
        <authorList>
            <consortium name="NIH - Mammalian Gene Collection (MGC) project"/>
        </authorList>
    </citation>
    <scope>NUCLEOTIDE SEQUENCE [LARGE SCALE MRNA]</scope>
    <source>
        <strain>Hereford</strain>
        <tissue>Fetal muscle</tissue>
    </source>
</reference>
<comment type="subunit">
    <text evidence="1">Interacts with ZNF106.</text>
</comment>
<comment type="subcellular location">
    <subcellularLocation>
        <location evidence="1">Nucleus</location>
        <location evidence="1">Nucleolus</location>
    </subcellularLocation>
</comment>
<comment type="sequence caution" evidence="4">
    <conflict type="erroneous initiation">
        <sequence resource="EMBL-CDS" id="AAI40579"/>
    </conflict>
    <text>Extended N-terminus.</text>
</comment>
<keyword id="KW-1017">Isopeptide bond</keyword>
<keyword id="KW-0488">Methylation</keyword>
<keyword id="KW-0539">Nucleus</keyword>
<keyword id="KW-0597">Phosphoprotein</keyword>
<keyword id="KW-1185">Reference proteome</keyword>
<keyword id="KW-0832">Ubl conjugation</keyword>
<accession>A5D7J3</accession>
<organism>
    <name type="scientific">Bos taurus</name>
    <name type="common">Bovine</name>
    <dbReference type="NCBI Taxonomy" id="9913"/>
    <lineage>
        <taxon>Eukaryota</taxon>
        <taxon>Metazoa</taxon>
        <taxon>Chordata</taxon>
        <taxon>Craniata</taxon>
        <taxon>Vertebrata</taxon>
        <taxon>Euteleostomi</taxon>
        <taxon>Mammalia</taxon>
        <taxon>Eutheria</taxon>
        <taxon>Laurasiatheria</taxon>
        <taxon>Artiodactyla</taxon>
        <taxon>Ruminantia</taxon>
        <taxon>Pecora</taxon>
        <taxon>Bovidae</taxon>
        <taxon>Bovinae</taxon>
        <taxon>Bos</taxon>
    </lineage>
</organism>
<evidence type="ECO:0000250" key="1"/>
<evidence type="ECO:0000250" key="2">
    <source>
        <dbReference type="UniProtKB" id="Q1ED39"/>
    </source>
</evidence>
<evidence type="ECO:0000256" key="3">
    <source>
        <dbReference type="SAM" id="MobiDB-lite"/>
    </source>
</evidence>
<evidence type="ECO:0000305" key="4"/>
<name>KNOP1_BOVIN</name>
<feature type="chain" id="PRO_0000321937" description="Lysine-rich nucleolar protein 1">
    <location>
        <begin position="1"/>
        <end position="452"/>
    </location>
</feature>
<feature type="region of interest" description="Disordered" evidence="3">
    <location>
        <begin position="1"/>
        <end position="28"/>
    </location>
</feature>
<feature type="region of interest" description="Disordered" evidence="3">
    <location>
        <begin position="55"/>
        <end position="161"/>
    </location>
</feature>
<feature type="region of interest" description="Disordered" evidence="3">
    <location>
        <begin position="184"/>
        <end position="305"/>
    </location>
</feature>
<feature type="region of interest" description="Interaction with ZNF106" evidence="1">
    <location>
        <begin position="300"/>
        <end position="452"/>
    </location>
</feature>
<feature type="compositionally biased region" description="Basic residues" evidence="3">
    <location>
        <begin position="65"/>
        <end position="75"/>
    </location>
</feature>
<feature type="compositionally biased region" description="Basic and acidic residues" evidence="3">
    <location>
        <begin position="78"/>
        <end position="98"/>
    </location>
</feature>
<feature type="compositionally biased region" description="Basic and acidic residues" evidence="3">
    <location>
        <begin position="127"/>
        <end position="139"/>
    </location>
</feature>
<feature type="compositionally biased region" description="Basic residues" evidence="3">
    <location>
        <begin position="140"/>
        <end position="151"/>
    </location>
</feature>
<feature type="compositionally biased region" description="Basic residues" evidence="3">
    <location>
        <begin position="258"/>
        <end position="267"/>
    </location>
</feature>
<feature type="compositionally biased region" description="Acidic residues" evidence="3">
    <location>
        <begin position="293"/>
        <end position="305"/>
    </location>
</feature>
<feature type="modified residue" description="Phosphoserine" evidence="2">
    <location>
        <position position="112"/>
    </location>
</feature>
<feature type="modified residue" description="Phosphoserine" evidence="2">
    <location>
        <position position="128"/>
    </location>
</feature>
<feature type="modified residue" description="Phosphoserine" evidence="2">
    <location>
        <position position="258"/>
    </location>
</feature>
<feature type="modified residue" description="Phosphothreonine" evidence="2">
    <location>
        <position position="304"/>
    </location>
</feature>
<feature type="modified residue" description="Omega-N-methylarginine" evidence="2">
    <location>
        <position position="424"/>
    </location>
</feature>
<feature type="cross-link" description="Glycyl lysine isopeptide (Lys-Gly) (interchain with G-Cter in SUMO2)" evidence="2">
    <location>
        <position position="7"/>
    </location>
</feature>
<feature type="cross-link" description="Glycyl lysine isopeptide (Lys-Gly) (interchain with G-Cter in SUMO2)" evidence="2">
    <location>
        <position position="126"/>
    </location>
</feature>
<feature type="cross-link" description="Glycyl lysine isopeptide (Lys-Gly) (interchain with G-Cter in SUMO2)" evidence="2">
    <location>
        <position position="280"/>
    </location>
</feature>
<feature type="cross-link" description="Glycyl lysine isopeptide (Lys-Gly) (interchain with G-Cter in SUMO2)" evidence="2">
    <location>
        <position position="313"/>
    </location>
</feature>
<feature type="cross-link" description="Glycyl lysine isopeptide (Lys-Gly) (interchain with G-Cter in SUMO2)" evidence="2">
    <location>
        <position position="347"/>
    </location>
</feature>
<feature type="cross-link" description="Glycyl lysine isopeptide (Lys-Gly) (interchain with G-Cter in SUMO2)" evidence="2">
    <location>
        <position position="367"/>
    </location>
</feature>
<feature type="cross-link" description="Glycyl lysine isopeptide (Lys-Gly) (interchain with G-Cter in SUMO2)" evidence="2">
    <location>
        <position position="369"/>
    </location>
</feature>
<feature type="cross-link" description="Glycyl lysine isopeptide (Lys-Gly) (interchain with G-Cter in SUMO2)" evidence="2">
    <location>
        <position position="401"/>
    </location>
</feature>
<feature type="cross-link" description="Glycyl lysine isopeptide (Lys-Gly) (interchain with G-Cter in SUMO2)" evidence="2">
    <location>
        <position position="436"/>
    </location>
</feature>
<protein>
    <recommendedName>
        <fullName>Lysine-rich nucleolar protein 1</fullName>
    </recommendedName>
    <alternativeName>
        <fullName>Testis-specific gene 118 protein</fullName>
    </alternativeName>
</protein>
<dbReference type="EMBL" id="BC140578">
    <property type="protein sequence ID" value="AAI40579.1"/>
    <property type="status" value="ALT_INIT"/>
    <property type="molecule type" value="mRNA"/>
</dbReference>
<dbReference type="RefSeq" id="NP_001160078.1">
    <property type="nucleotide sequence ID" value="NM_001166606.2"/>
</dbReference>
<dbReference type="SMR" id="A5D7J3"/>
<dbReference type="FunCoup" id="A5D7J3">
    <property type="interactions" value="846"/>
</dbReference>
<dbReference type="STRING" id="9913.ENSBTAP00000058263"/>
<dbReference type="PaxDb" id="9913-ENSBTAP00000037276"/>
<dbReference type="GeneID" id="511442"/>
<dbReference type="KEGG" id="bta:511442"/>
<dbReference type="CTD" id="400506"/>
<dbReference type="eggNOG" id="ENOG502S1WB">
    <property type="taxonomic scope" value="Eukaryota"/>
</dbReference>
<dbReference type="HOGENOM" id="CLU_048750_0_0_1"/>
<dbReference type="InParanoid" id="A5D7J3"/>
<dbReference type="OrthoDB" id="9451331at2759"/>
<dbReference type="TreeFam" id="TF336149"/>
<dbReference type="Proteomes" id="UP000009136">
    <property type="component" value="Unplaced"/>
</dbReference>
<dbReference type="GO" id="GO:0005730">
    <property type="term" value="C:nucleolus"/>
    <property type="evidence" value="ECO:0007669"/>
    <property type="project" value="UniProtKB-SubCell"/>
</dbReference>
<dbReference type="InterPro" id="IPR028124">
    <property type="entry name" value="SMAP_dom"/>
</dbReference>
<dbReference type="PANTHER" id="PTHR22426">
    <property type="entry name" value="ARGININE_SERINE-RICH COILED-COIL PROTEIN 2"/>
    <property type="match status" value="1"/>
</dbReference>
<dbReference type="PANTHER" id="PTHR22426:SF1">
    <property type="entry name" value="LYSINE-RICH NUCLEOLAR PROTEIN 1"/>
    <property type="match status" value="1"/>
</dbReference>
<dbReference type="Pfam" id="PF15477">
    <property type="entry name" value="SMAP"/>
    <property type="match status" value="1"/>
</dbReference>
<sequence length="452" mass="51046">MITKAHKGEVGLGLPEKKKKKKKVVKEPKTQYSVLNSDNYFAEVCPRATPPLKGVIQEQAPRMPLVKKKKKKKGHSTICEEHLEPEITLRAGRTERSHSPRTQALGLSKSLSAEKRKSMSPGSRVKTSPDPRQDEEVTRVGKKLKKHKKEKKAKEATAFSGRDPWFCEAGNTVYTHSVGKDGVREQAALGQKQKQGSPREHSVKMKKKKKIHWEGDPPLGHPECSWSLESSPTKGSKKKPVRVEAPEYIPIGDGSRASVKKKVKSKKRVEQADTEEPALKRKKKKKKRQQSEVAEEPWEEEPDTDLEVVLEKKGNMDEAHIDQVRRKALQEEIDRESGKTEAYDTKKWTGTQFGQWDTAGFENEEQKLKFLKLMGGFKNLPPSFSRPSPTVARPSMALSKKAADTLQRNLQQDYDRALSWKYSRGAGLGFSTAPAKVFYIDRNASKSIKFED</sequence>